<reference key="1">
    <citation type="journal article" date="2004" name="Genome Res.">
        <title>The status, quality, and expansion of the NIH full-length cDNA project: the Mammalian Gene Collection (MGC).</title>
        <authorList>
            <consortium name="The MGC Project Team"/>
        </authorList>
    </citation>
    <scope>NUCLEOTIDE SEQUENCE [LARGE SCALE MRNA]</scope>
    <source>
        <tissue>Mammary gland</tissue>
    </source>
</reference>
<gene>
    <name type="primary">TMEM256</name>
    <name type="synonym">C17orf61</name>
</gene>
<keyword id="KW-0007">Acetylation</keyword>
<keyword id="KW-0472">Membrane</keyword>
<keyword id="KW-1267">Proteomics identification</keyword>
<keyword id="KW-1185">Reference proteome</keyword>
<keyword id="KW-0732">Signal</keyword>
<keyword id="KW-0812">Transmembrane</keyword>
<keyword id="KW-1133">Transmembrane helix</keyword>
<dbReference type="EMBL" id="BC030270">
    <property type="protein sequence ID" value="AAH30270.1"/>
    <property type="molecule type" value="mRNA"/>
</dbReference>
<dbReference type="CCDS" id="CCDS11102.1"/>
<dbReference type="RefSeq" id="NP_689979.1">
    <property type="nucleotide sequence ID" value="NM_152766.5"/>
</dbReference>
<dbReference type="BioGRID" id="129054">
    <property type="interactions" value="17"/>
</dbReference>
<dbReference type="FunCoup" id="Q8N2U0">
    <property type="interactions" value="375"/>
</dbReference>
<dbReference type="IntAct" id="Q8N2U0">
    <property type="interactions" value="13"/>
</dbReference>
<dbReference type="STRING" id="9606.ENSP00000301939"/>
<dbReference type="iPTMnet" id="Q8N2U0"/>
<dbReference type="PhosphoSitePlus" id="Q8N2U0"/>
<dbReference type="SwissPalm" id="Q8N2U0"/>
<dbReference type="BioMuta" id="TMEM256"/>
<dbReference type="DMDM" id="74728725"/>
<dbReference type="jPOST" id="Q8N2U0"/>
<dbReference type="MassIVE" id="Q8N2U0"/>
<dbReference type="PaxDb" id="9606-ENSP00000301939"/>
<dbReference type="PeptideAtlas" id="Q8N2U0"/>
<dbReference type="ProteomicsDB" id="71735"/>
<dbReference type="Pumba" id="Q8N2U0"/>
<dbReference type="TopDownProteomics" id="Q8N2U0"/>
<dbReference type="Antibodypedia" id="76715">
    <property type="antibodies" value="26 antibodies from 8 providers"/>
</dbReference>
<dbReference type="DNASU" id="254863"/>
<dbReference type="Ensembl" id="ENST00000302422.4">
    <property type="protein sequence ID" value="ENSP00000301939.3"/>
    <property type="gene ID" value="ENSG00000205544.4"/>
</dbReference>
<dbReference type="Ensembl" id="ENST00000639136.2">
    <property type="protein sequence ID" value="ENSP00000491711.1"/>
    <property type="gene ID" value="ENSG00000283771.2"/>
</dbReference>
<dbReference type="GeneID" id="254863"/>
<dbReference type="KEGG" id="hsa:254863"/>
<dbReference type="MANE-Select" id="ENST00000302422.4">
    <property type="protein sequence ID" value="ENSP00000301939.3"/>
    <property type="RefSeq nucleotide sequence ID" value="NM_152766.5"/>
    <property type="RefSeq protein sequence ID" value="NP_689979.1"/>
</dbReference>
<dbReference type="UCSC" id="uc002ggs.4">
    <property type="organism name" value="human"/>
</dbReference>
<dbReference type="AGR" id="HGNC:28618"/>
<dbReference type="CTD" id="254863"/>
<dbReference type="DisGeNET" id="254863"/>
<dbReference type="GeneCards" id="TMEM256"/>
<dbReference type="HGNC" id="HGNC:28618">
    <property type="gene designation" value="TMEM256"/>
</dbReference>
<dbReference type="HPA" id="ENSG00000205544">
    <property type="expression patterns" value="Low tissue specificity"/>
</dbReference>
<dbReference type="MalaCards" id="TMEM256"/>
<dbReference type="MIM" id="617779">
    <property type="type" value="gene"/>
</dbReference>
<dbReference type="neXtProt" id="NX_Q8N2U0"/>
<dbReference type="OpenTargets" id="ENSG00000205544"/>
<dbReference type="PharmGKB" id="PA142672244"/>
<dbReference type="VEuPathDB" id="HostDB:ENSG00000205544"/>
<dbReference type="eggNOG" id="KOG3472">
    <property type="taxonomic scope" value="Eukaryota"/>
</dbReference>
<dbReference type="GeneTree" id="ENSGT00390000000334"/>
<dbReference type="HOGENOM" id="CLU_096548_1_2_1"/>
<dbReference type="InParanoid" id="Q8N2U0"/>
<dbReference type="OMA" id="YHYSITG"/>
<dbReference type="OrthoDB" id="269173at2759"/>
<dbReference type="PAN-GO" id="Q8N2U0">
    <property type="GO annotations" value="1 GO annotation based on evolutionary models"/>
</dbReference>
<dbReference type="PhylomeDB" id="Q8N2U0"/>
<dbReference type="TreeFam" id="TF300271"/>
<dbReference type="PathwayCommons" id="Q8N2U0"/>
<dbReference type="SignaLink" id="Q8N2U0"/>
<dbReference type="BioGRID-ORCS" id="254863">
    <property type="hits" value="9 hits in 1147 CRISPR screens"/>
</dbReference>
<dbReference type="CD-CODE" id="FB4E32DD">
    <property type="entry name" value="Presynaptic clusters and postsynaptic densities"/>
</dbReference>
<dbReference type="ChiTaRS" id="TMEM256">
    <property type="organism name" value="human"/>
</dbReference>
<dbReference type="GenomeRNAi" id="254863"/>
<dbReference type="Pharos" id="Q8N2U0">
    <property type="development level" value="Tdark"/>
</dbReference>
<dbReference type="PRO" id="PR:Q8N2U0"/>
<dbReference type="Proteomes" id="UP000005640">
    <property type="component" value="Chromosome 17"/>
</dbReference>
<dbReference type="RNAct" id="Q8N2U0">
    <property type="molecule type" value="protein"/>
</dbReference>
<dbReference type="Bgee" id="ENSG00000205544">
    <property type="expression patterns" value="Expressed in duodenum and 98 other cell types or tissues"/>
</dbReference>
<dbReference type="ExpressionAtlas" id="Q8N2U0">
    <property type="expression patterns" value="baseline and differential"/>
</dbReference>
<dbReference type="GO" id="GO:0070062">
    <property type="term" value="C:extracellular exosome"/>
    <property type="evidence" value="ECO:0007005"/>
    <property type="project" value="UniProtKB"/>
</dbReference>
<dbReference type="GO" id="GO:0016020">
    <property type="term" value="C:membrane"/>
    <property type="evidence" value="ECO:0000318"/>
    <property type="project" value="GO_Central"/>
</dbReference>
<dbReference type="GO" id="GO:0005739">
    <property type="term" value="C:mitochondrion"/>
    <property type="evidence" value="ECO:0006056"/>
    <property type="project" value="FlyBase"/>
</dbReference>
<dbReference type="InterPro" id="IPR006696">
    <property type="entry name" value="DUF423"/>
</dbReference>
<dbReference type="PANTHER" id="PTHR43461">
    <property type="entry name" value="TRANSMEMBRANE PROTEIN 256"/>
    <property type="match status" value="1"/>
</dbReference>
<dbReference type="PANTHER" id="PTHR43461:SF1">
    <property type="entry name" value="TRANSMEMBRANE PROTEIN 256"/>
    <property type="match status" value="1"/>
</dbReference>
<dbReference type="Pfam" id="PF04241">
    <property type="entry name" value="DUF423"/>
    <property type="match status" value="1"/>
</dbReference>
<proteinExistence type="evidence at protein level"/>
<name>TM256_HUMAN</name>
<sequence>MAGPAAAFRRLGALSGAAALGFASYGAHGAQFPDAYGKELFDKANKHHFLHSLALLGVPHCRKPLWAGLLLASGTTLFCTSFYYQALSGDPSIQTLAPAGGTLLLLGWLALAL</sequence>
<accession>Q8N2U0</accession>
<organism>
    <name type="scientific">Homo sapiens</name>
    <name type="common">Human</name>
    <dbReference type="NCBI Taxonomy" id="9606"/>
    <lineage>
        <taxon>Eukaryota</taxon>
        <taxon>Metazoa</taxon>
        <taxon>Chordata</taxon>
        <taxon>Craniata</taxon>
        <taxon>Vertebrata</taxon>
        <taxon>Euteleostomi</taxon>
        <taxon>Mammalia</taxon>
        <taxon>Eutheria</taxon>
        <taxon>Euarchontoglires</taxon>
        <taxon>Primates</taxon>
        <taxon>Haplorrhini</taxon>
        <taxon>Catarrhini</taxon>
        <taxon>Hominidae</taxon>
        <taxon>Homo</taxon>
    </lineage>
</organism>
<feature type="signal peptide" evidence="2">
    <location>
        <begin position="1"/>
        <end position="29"/>
    </location>
</feature>
<feature type="chain" id="PRO_0000287170" description="Transmembrane protein 256">
    <location>
        <begin position="30"/>
        <end position="113"/>
    </location>
</feature>
<feature type="topological domain" description="Extracellular" evidence="2">
    <location>
        <begin position="30"/>
        <end position="63"/>
    </location>
</feature>
<feature type="transmembrane region" description="Helical" evidence="2">
    <location>
        <begin position="64"/>
        <end position="84"/>
    </location>
</feature>
<feature type="topological domain" description="Cytoplasmic" evidence="2">
    <location>
        <begin position="85"/>
        <end position="92"/>
    </location>
</feature>
<feature type="transmembrane region" description="Helical" evidence="2">
    <location>
        <begin position="93"/>
        <end position="113"/>
    </location>
</feature>
<feature type="modified residue" description="N6-acetyllysine" evidence="1">
    <location>
        <position position="43"/>
    </location>
</feature>
<evidence type="ECO:0000250" key="1">
    <source>
        <dbReference type="UniProtKB" id="Q5F285"/>
    </source>
</evidence>
<evidence type="ECO:0000255" key="2"/>
<evidence type="ECO:0000305" key="3"/>
<comment type="subcellular location">
    <subcellularLocation>
        <location evidence="3">Membrane</location>
        <topology evidence="3">Multi-pass membrane protein</topology>
    </subcellularLocation>
</comment>
<comment type="similarity">
    <text evidence="3">Belongs to the TMEM256 family.</text>
</comment>
<protein>
    <recommendedName>
        <fullName>Transmembrane protein 256</fullName>
    </recommendedName>
</protein>